<gene>
    <name type="primary">AIM18</name>
    <name type="synonym">FMP22</name>
    <name type="ordered locus">KLTH0D17534g</name>
</gene>
<name>AIM18_LACTC</name>
<protein>
    <recommendedName>
        <fullName>Altered inheritance of mitochondria protein 18, mitochondrial</fullName>
    </recommendedName>
</protein>
<keyword id="KW-0496">Mitochondrion</keyword>
<keyword id="KW-1185">Reference proteome</keyword>
<keyword id="KW-0809">Transit peptide</keyword>
<feature type="transit peptide" description="Mitochondrion" evidence="2">
    <location>
        <begin position="1"/>
        <end position="22"/>
    </location>
</feature>
<feature type="chain" id="PRO_0000399553" description="Altered inheritance of mitochondria protein 18, mitochondrial">
    <location>
        <begin position="23"/>
        <end position="305"/>
    </location>
</feature>
<organism>
    <name type="scientific">Lachancea thermotolerans (strain ATCC 56472 / CBS 6340 / NRRL Y-8284)</name>
    <name type="common">Yeast</name>
    <name type="synonym">Kluyveromyces thermotolerans</name>
    <dbReference type="NCBI Taxonomy" id="559295"/>
    <lineage>
        <taxon>Eukaryota</taxon>
        <taxon>Fungi</taxon>
        <taxon>Dikarya</taxon>
        <taxon>Ascomycota</taxon>
        <taxon>Saccharomycotina</taxon>
        <taxon>Saccharomycetes</taxon>
        <taxon>Saccharomycetales</taxon>
        <taxon>Saccharomycetaceae</taxon>
        <taxon>Lachancea</taxon>
    </lineage>
</organism>
<evidence type="ECO:0000250" key="1"/>
<evidence type="ECO:0000255" key="2"/>
<evidence type="ECO:0000305" key="3"/>
<accession>C5DFS5</accession>
<comment type="subcellular location">
    <subcellularLocation>
        <location evidence="1">Mitochondrion</location>
    </subcellularLocation>
</comment>
<comment type="similarity">
    <text evidence="3">Belongs to the AIM18/AIM46 family.</text>
</comment>
<dbReference type="EMBL" id="CU928168">
    <property type="protein sequence ID" value="CAR23030.1"/>
    <property type="molecule type" value="Genomic_DNA"/>
</dbReference>
<dbReference type="RefSeq" id="XP_002553468.1">
    <property type="nucleotide sequence ID" value="XM_002553422.1"/>
</dbReference>
<dbReference type="SMR" id="C5DFS5"/>
<dbReference type="FunCoup" id="C5DFS5">
    <property type="interactions" value="46"/>
</dbReference>
<dbReference type="STRING" id="559295.C5DFS5"/>
<dbReference type="GeneID" id="8295718"/>
<dbReference type="KEGG" id="lth:KLTH0D17534g"/>
<dbReference type="eggNOG" id="ENOG502RGD3">
    <property type="taxonomic scope" value="Eukaryota"/>
</dbReference>
<dbReference type="HOGENOM" id="CLU_038840_0_0_1"/>
<dbReference type="InParanoid" id="C5DFS5"/>
<dbReference type="OMA" id="PMRNTNF"/>
<dbReference type="OrthoDB" id="18193at2759"/>
<dbReference type="Proteomes" id="UP000002036">
    <property type="component" value="Chromosome D"/>
</dbReference>
<dbReference type="GO" id="GO:0005739">
    <property type="term" value="C:mitochondrion"/>
    <property type="evidence" value="ECO:0007669"/>
    <property type="project" value="UniProtKB-SubCell"/>
</dbReference>
<dbReference type="GO" id="GO:0016872">
    <property type="term" value="F:intramolecular lyase activity"/>
    <property type="evidence" value="ECO:0007669"/>
    <property type="project" value="InterPro"/>
</dbReference>
<dbReference type="Gene3D" id="3.50.70.10">
    <property type="match status" value="1"/>
</dbReference>
<dbReference type="InterPro" id="IPR016087">
    <property type="entry name" value="Chalcone_isomerase"/>
</dbReference>
<dbReference type="InterPro" id="IPR016088">
    <property type="entry name" value="Chalcone_isomerase_3-sand"/>
</dbReference>
<dbReference type="InterPro" id="IPR036298">
    <property type="entry name" value="Chalcone_isomerase_sf"/>
</dbReference>
<dbReference type="PANTHER" id="PTHR47284">
    <property type="entry name" value="FATTY-ACID-BINDING PROTEIN 2"/>
    <property type="match status" value="1"/>
</dbReference>
<dbReference type="PANTHER" id="PTHR47284:SF3">
    <property type="entry name" value="FATTY-ACID-BINDING PROTEIN 2"/>
    <property type="match status" value="1"/>
</dbReference>
<dbReference type="Pfam" id="PF16035">
    <property type="entry name" value="Chalcone_2"/>
    <property type="match status" value="1"/>
</dbReference>
<dbReference type="SUPFAM" id="SSF54626">
    <property type="entry name" value="Chalcone isomerase"/>
    <property type="match status" value="1"/>
</dbReference>
<reference key="1">
    <citation type="journal article" date="2009" name="Genome Res.">
        <title>Comparative genomics of protoploid Saccharomycetaceae.</title>
        <authorList>
            <consortium name="The Genolevures Consortium"/>
            <person name="Souciet J.-L."/>
            <person name="Dujon B."/>
            <person name="Gaillardin C."/>
            <person name="Johnston M."/>
            <person name="Baret P.V."/>
            <person name="Cliften P."/>
            <person name="Sherman D.J."/>
            <person name="Weissenbach J."/>
            <person name="Westhof E."/>
            <person name="Wincker P."/>
            <person name="Jubin C."/>
            <person name="Poulain J."/>
            <person name="Barbe V."/>
            <person name="Segurens B."/>
            <person name="Artiguenave F."/>
            <person name="Anthouard V."/>
            <person name="Vacherie B."/>
            <person name="Val M.-E."/>
            <person name="Fulton R.S."/>
            <person name="Minx P."/>
            <person name="Wilson R."/>
            <person name="Durrens P."/>
            <person name="Jean G."/>
            <person name="Marck C."/>
            <person name="Martin T."/>
            <person name="Nikolski M."/>
            <person name="Rolland T."/>
            <person name="Seret M.-L."/>
            <person name="Casaregola S."/>
            <person name="Despons L."/>
            <person name="Fairhead C."/>
            <person name="Fischer G."/>
            <person name="Lafontaine I."/>
            <person name="Leh V."/>
            <person name="Lemaire M."/>
            <person name="de Montigny J."/>
            <person name="Neuveglise C."/>
            <person name="Thierry A."/>
            <person name="Blanc-Lenfle I."/>
            <person name="Bleykasten C."/>
            <person name="Diffels J."/>
            <person name="Fritsch E."/>
            <person name="Frangeul L."/>
            <person name="Goeffon A."/>
            <person name="Jauniaux N."/>
            <person name="Kachouri-Lafond R."/>
            <person name="Payen C."/>
            <person name="Potier S."/>
            <person name="Pribylova L."/>
            <person name="Ozanne C."/>
            <person name="Richard G.-F."/>
            <person name="Sacerdot C."/>
            <person name="Straub M.-L."/>
            <person name="Talla E."/>
        </authorList>
    </citation>
    <scope>NUCLEOTIDE SEQUENCE [LARGE SCALE GENOMIC DNA]</scope>
    <source>
        <strain>ATCC 56472 / CBS 6340 / NRRL Y-8284</strain>
    </source>
</reference>
<sequence length="305" mass="33713">MIRALARGATIPRSFHYIQYYQKRNLLTHGLKKKHIPPYKTILALGAGAFISGLFMLQKDSITNDAGPIENSESSVEVDKSVSPFTVVLSPPETLLTTKYTLLGFGPRSVTFLGFKVYALGIYVANEDLPLIPKILNPTYLCKAFLDTDSAKSHSENVGAALKDATKSRVLVGSLIDGGVRFMAKITPIRNTDFNHLKDGLVKSILNHPECQKNQEAVSRGLQELKNAFTRKGSVPKNDDLIIELQANGSLQLSYRSRKQNECMMLGRVDEPLIGKFLFSQYLGGDKPLSPPTRETFAQKVKTLV</sequence>
<proteinExistence type="inferred from homology"/>